<protein>
    <recommendedName>
        <fullName>Cationic trypsin-3</fullName>
        <ecNumber>3.4.21.4</ecNumber>
    </recommendedName>
    <alternativeName>
        <fullName>Cationic trypsin III</fullName>
    </alternativeName>
    <alternativeName>
        <fullName>Pretrypsinogen III</fullName>
    </alternativeName>
</protein>
<keyword id="KW-0106">Calcium</keyword>
<keyword id="KW-0222">Digestion</keyword>
<keyword id="KW-1015">Disulfide bond</keyword>
<keyword id="KW-0378">Hydrolase</keyword>
<keyword id="KW-0479">Metal-binding</keyword>
<keyword id="KW-0645">Protease</keyword>
<keyword id="KW-1185">Reference proteome</keyword>
<keyword id="KW-0964">Secreted</keyword>
<keyword id="KW-0720">Serine protease</keyword>
<keyword id="KW-0732">Signal</keyword>
<keyword id="KW-0865">Zymogen</keyword>
<gene>
    <name type="primary">Try3</name>
</gene>
<sequence>MKALIFLAFLGAAVALPLDDDDDKIVGGYTCQKNSLPYQVSLNAGYHFCGGSLINSQWVVSAAHCYKSRIQVRLGEHNIDVVEGGEQFIDAAKIIRHPSYNANTFDNDIMLIKLNSPATLNSRVSTVSLPRSCGSSGTKCLVSGWGNTLSSGTNYPSLLQCLDAPVLSDSSCKSSYPGKITSNMFCLGFLEGGKDSCQGDSGGPVVCNGQLQGVVSWGYGCAQKGKPGVYTKVCNYVNWIQQTVAAN</sequence>
<feature type="signal peptide">
    <location>
        <begin position="1"/>
        <end position="15"/>
    </location>
</feature>
<feature type="propeptide" id="PRO_0000028211" description="Activation peptide">
    <location>
        <begin position="16"/>
        <end position="24"/>
    </location>
</feature>
<feature type="chain" id="PRO_0000028212" description="Cationic trypsin-3">
    <location>
        <begin position="25"/>
        <end position="247"/>
    </location>
</feature>
<feature type="domain" description="Peptidase S1" evidence="2">
    <location>
        <begin position="25"/>
        <end position="245"/>
    </location>
</feature>
<feature type="active site" description="Charge relay system" evidence="1">
    <location>
        <position position="64"/>
    </location>
</feature>
<feature type="active site" description="Charge relay system" evidence="1">
    <location>
        <position position="108"/>
    </location>
</feature>
<feature type="active site" description="Charge relay system" evidence="1">
    <location>
        <position position="201"/>
    </location>
</feature>
<feature type="binding site" evidence="1">
    <location>
        <position position="76"/>
    </location>
    <ligand>
        <name>Ca(2+)</name>
        <dbReference type="ChEBI" id="CHEBI:29108"/>
    </ligand>
</feature>
<feature type="binding site" evidence="1">
    <location>
        <position position="78"/>
    </location>
    <ligand>
        <name>Ca(2+)</name>
        <dbReference type="ChEBI" id="CHEBI:29108"/>
    </ligand>
</feature>
<feature type="binding site" evidence="1">
    <location>
        <position position="81"/>
    </location>
    <ligand>
        <name>Ca(2+)</name>
        <dbReference type="ChEBI" id="CHEBI:29108"/>
    </ligand>
</feature>
<feature type="binding site" evidence="1">
    <location>
        <position position="86"/>
    </location>
    <ligand>
        <name>Ca(2+)</name>
        <dbReference type="ChEBI" id="CHEBI:29108"/>
    </ligand>
</feature>
<feature type="site" description="Required for specificity" evidence="1">
    <location>
        <position position="195"/>
    </location>
</feature>
<feature type="disulfide bond" evidence="2">
    <location>
        <begin position="31"/>
        <end position="161"/>
    </location>
</feature>
<feature type="disulfide bond" evidence="2">
    <location>
        <begin position="49"/>
        <end position="65"/>
    </location>
</feature>
<feature type="disulfide bond" evidence="2">
    <location>
        <begin position="133"/>
        <end position="234"/>
    </location>
</feature>
<feature type="disulfide bond" evidence="2">
    <location>
        <begin position="140"/>
        <end position="207"/>
    </location>
</feature>
<feature type="disulfide bond" evidence="2">
    <location>
        <begin position="172"/>
        <end position="186"/>
    </location>
</feature>
<feature type="disulfide bond" evidence="2">
    <location>
        <begin position="197"/>
        <end position="221"/>
    </location>
</feature>
<evidence type="ECO:0000250" key="1"/>
<evidence type="ECO:0000255" key="2">
    <source>
        <dbReference type="PROSITE-ProRule" id="PRU00274"/>
    </source>
</evidence>
<accession>P08426</accession>
<reference key="1">
    <citation type="journal article" date="1987" name="Biochemistry">
        <title>Isolation and characterization of a cDNA encoding rat cationic trypsinogen.</title>
        <authorList>
            <person name="Fletcher T.S."/>
            <person name="Alhadeff M."/>
            <person name="Craik C.S."/>
            <person name="Largman C."/>
        </authorList>
    </citation>
    <scope>NUCLEOTIDE SEQUENCE [MRNA]</scope>
</reference>
<dbReference type="EC" id="3.4.21.4"/>
<dbReference type="EMBL" id="M16624">
    <property type="protein sequence ID" value="AAA41985.1"/>
    <property type="molecule type" value="mRNA"/>
</dbReference>
<dbReference type="PIR" id="A27547">
    <property type="entry name" value="A27547"/>
</dbReference>
<dbReference type="RefSeq" id="NP_775150.1">
    <property type="nucleotide sequence ID" value="NM_173127.1"/>
</dbReference>
<dbReference type="SMR" id="P08426"/>
<dbReference type="BioGRID" id="251902">
    <property type="interactions" value="1"/>
</dbReference>
<dbReference type="FunCoup" id="P08426">
    <property type="interactions" value="164"/>
</dbReference>
<dbReference type="STRING" id="10116.ENSRNOP00000018042"/>
<dbReference type="MEROPS" id="S01.151"/>
<dbReference type="PhosphoSitePlus" id="P08426"/>
<dbReference type="PaxDb" id="10116-ENSRNOP00000018042"/>
<dbReference type="GeneID" id="286911"/>
<dbReference type="KEGG" id="rno:286911"/>
<dbReference type="UCSC" id="RGD:708437">
    <property type="organism name" value="rat"/>
</dbReference>
<dbReference type="AGR" id="RGD:708437"/>
<dbReference type="CTD" id="67373"/>
<dbReference type="RGD" id="708437">
    <property type="gene designation" value="LOC286911"/>
</dbReference>
<dbReference type="eggNOG" id="KOG3627">
    <property type="taxonomic scope" value="Eukaryota"/>
</dbReference>
<dbReference type="InParanoid" id="P08426"/>
<dbReference type="OrthoDB" id="20460at9989"/>
<dbReference type="PhylomeDB" id="P08426"/>
<dbReference type="PRO" id="PR:P08426"/>
<dbReference type="Proteomes" id="UP000002494">
    <property type="component" value="Unplaced"/>
</dbReference>
<dbReference type="GO" id="GO:0005615">
    <property type="term" value="C:extracellular space"/>
    <property type="evidence" value="ECO:0000318"/>
    <property type="project" value="GO_Central"/>
</dbReference>
<dbReference type="GO" id="GO:0046872">
    <property type="term" value="F:metal ion binding"/>
    <property type="evidence" value="ECO:0007669"/>
    <property type="project" value="UniProtKB-KW"/>
</dbReference>
<dbReference type="GO" id="GO:0004252">
    <property type="term" value="F:serine-type endopeptidase activity"/>
    <property type="evidence" value="ECO:0000318"/>
    <property type="project" value="GO_Central"/>
</dbReference>
<dbReference type="GO" id="GO:0007586">
    <property type="term" value="P:digestion"/>
    <property type="evidence" value="ECO:0007669"/>
    <property type="project" value="UniProtKB-KW"/>
</dbReference>
<dbReference type="GO" id="GO:0006508">
    <property type="term" value="P:proteolysis"/>
    <property type="evidence" value="ECO:0007669"/>
    <property type="project" value="UniProtKB-KW"/>
</dbReference>
<dbReference type="CDD" id="cd00190">
    <property type="entry name" value="Tryp_SPc"/>
    <property type="match status" value="1"/>
</dbReference>
<dbReference type="FunFam" id="2.40.10.10:FF:000019">
    <property type="entry name" value="Anionic trypsin"/>
    <property type="match status" value="1"/>
</dbReference>
<dbReference type="Gene3D" id="2.40.10.10">
    <property type="entry name" value="Trypsin-like serine proteases"/>
    <property type="match status" value="2"/>
</dbReference>
<dbReference type="InterPro" id="IPR009003">
    <property type="entry name" value="Peptidase_S1_PA"/>
</dbReference>
<dbReference type="InterPro" id="IPR043504">
    <property type="entry name" value="Peptidase_S1_PA_chymotrypsin"/>
</dbReference>
<dbReference type="InterPro" id="IPR001314">
    <property type="entry name" value="Peptidase_S1A"/>
</dbReference>
<dbReference type="InterPro" id="IPR050127">
    <property type="entry name" value="Serine_Proteases_S1"/>
</dbReference>
<dbReference type="InterPro" id="IPR001254">
    <property type="entry name" value="Trypsin_dom"/>
</dbReference>
<dbReference type="InterPro" id="IPR018114">
    <property type="entry name" value="TRYPSIN_HIS"/>
</dbReference>
<dbReference type="InterPro" id="IPR033116">
    <property type="entry name" value="TRYPSIN_SER"/>
</dbReference>
<dbReference type="PANTHER" id="PTHR24264:SF15">
    <property type="entry name" value="RIKEN CDNA 2210010C04 GENE"/>
    <property type="match status" value="1"/>
</dbReference>
<dbReference type="PANTHER" id="PTHR24264">
    <property type="entry name" value="TRYPSIN-RELATED"/>
    <property type="match status" value="1"/>
</dbReference>
<dbReference type="Pfam" id="PF00089">
    <property type="entry name" value="Trypsin"/>
    <property type="match status" value="1"/>
</dbReference>
<dbReference type="PRINTS" id="PR00722">
    <property type="entry name" value="CHYMOTRYPSIN"/>
</dbReference>
<dbReference type="SMART" id="SM00020">
    <property type="entry name" value="Tryp_SPc"/>
    <property type="match status" value="1"/>
</dbReference>
<dbReference type="SUPFAM" id="SSF50494">
    <property type="entry name" value="Trypsin-like serine proteases"/>
    <property type="match status" value="1"/>
</dbReference>
<dbReference type="PROSITE" id="PS50240">
    <property type="entry name" value="TRYPSIN_DOM"/>
    <property type="match status" value="1"/>
</dbReference>
<dbReference type="PROSITE" id="PS00134">
    <property type="entry name" value="TRYPSIN_HIS"/>
    <property type="match status" value="1"/>
</dbReference>
<dbReference type="PROSITE" id="PS00135">
    <property type="entry name" value="TRYPSIN_SER"/>
    <property type="match status" value="1"/>
</dbReference>
<organism>
    <name type="scientific">Rattus norvegicus</name>
    <name type="common">Rat</name>
    <dbReference type="NCBI Taxonomy" id="10116"/>
    <lineage>
        <taxon>Eukaryota</taxon>
        <taxon>Metazoa</taxon>
        <taxon>Chordata</taxon>
        <taxon>Craniata</taxon>
        <taxon>Vertebrata</taxon>
        <taxon>Euteleostomi</taxon>
        <taxon>Mammalia</taxon>
        <taxon>Eutheria</taxon>
        <taxon>Euarchontoglires</taxon>
        <taxon>Glires</taxon>
        <taxon>Rodentia</taxon>
        <taxon>Myomorpha</taxon>
        <taxon>Muroidea</taxon>
        <taxon>Muridae</taxon>
        <taxon>Murinae</taxon>
        <taxon>Rattus</taxon>
    </lineage>
</organism>
<proteinExistence type="evidence at transcript level"/>
<comment type="catalytic activity">
    <reaction>
        <text>Preferential cleavage: Arg-|-Xaa, Lys-|-Xaa.</text>
        <dbReference type="EC" id="3.4.21.4"/>
    </reaction>
</comment>
<comment type="cofactor">
    <cofactor evidence="1">
        <name>Ca(2+)</name>
        <dbReference type="ChEBI" id="CHEBI:29108"/>
    </cofactor>
    <text evidence="1">Binds 1 Ca(2+) ion per subunit.</text>
</comment>
<comment type="subcellular location">
    <subcellularLocation>
        <location>Secreted</location>
        <location>Extracellular space</location>
    </subcellularLocation>
</comment>
<comment type="similarity">
    <text evidence="2">Belongs to the peptidase S1 family.</text>
</comment>
<name>TRY3_RAT</name>